<organism>
    <name type="scientific">Xanthomonas axonopodis pv. citri (strain 306)</name>
    <dbReference type="NCBI Taxonomy" id="190486"/>
    <lineage>
        <taxon>Bacteria</taxon>
        <taxon>Pseudomonadati</taxon>
        <taxon>Pseudomonadota</taxon>
        <taxon>Gammaproteobacteria</taxon>
        <taxon>Lysobacterales</taxon>
        <taxon>Lysobacteraceae</taxon>
        <taxon>Xanthomonas</taxon>
    </lineage>
</organism>
<protein>
    <recommendedName>
        <fullName>DNA translocase FtsK</fullName>
    </recommendedName>
</protein>
<proteinExistence type="inferred from homology"/>
<reference key="1">
    <citation type="journal article" date="2002" name="Nature">
        <title>Comparison of the genomes of two Xanthomonas pathogens with differing host specificities.</title>
        <authorList>
            <person name="da Silva A.C.R."/>
            <person name="Ferro J.A."/>
            <person name="Reinach F.C."/>
            <person name="Farah C.S."/>
            <person name="Furlan L.R."/>
            <person name="Quaggio R.B."/>
            <person name="Monteiro-Vitorello C.B."/>
            <person name="Van Sluys M.A."/>
            <person name="Almeida N.F. Jr."/>
            <person name="Alves L.M.C."/>
            <person name="do Amaral A.M."/>
            <person name="Bertolini M.C."/>
            <person name="Camargo L.E.A."/>
            <person name="Camarotte G."/>
            <person name="Cannavan F."/>
            <person name="Cardozo J."/>
            <person name="Chambergo F."/>
            <person name="Ciapina L.P."/>
            <person name="Cicarelli R.M.B."/>
            <person name="Coutinho L.L."/>
            <person name="Cursino-Santos J.R."/>
            <person name="El-Dorry H."/>
            <person name="Faria J.B."/>
            <person name="Ferreira A.J.S."/>
            <person name="Ferreira R.C.C."/>
            <person name="Ferro M.I.T."/>
            <person name="Formighieri E.F."/>
            <person name="Franco M.C."/>
            <person name="Greggio C.C."/>
            <person name="Gruber A."/>
            <person name="Katsuyama A.M."/>
            <person name="Kishi L.T."/>
            <person name="Leite R.P."/>
            <person name="Lemos E.G.M."/>
            <person name="Lemos M.V.F."/>
            <person name="Locali E.C."/>
            <person name="Machado M.A."/>
            <person name="Madeira A.M.B.N."/>
            <person name="Martinez-Rossi N.M."/>
            <person name="Martins E.C."/>
            <person name="Meidanis J."/>
            <person name="Menck C.F.M."/>
            <person name="Miyaki C.Y."/>
            <person name="Moon D.H."/>
            <person name="Moreira L.M."/>
            <person name="Novo M.T.M."/>
            <person name="Okura V.K."/>
            <person name="Oliveira M.C."/>
            <person name="Oliveira V.R."/>
            <person name="Pereira H.A."/>
            <person name="Rossi A."/>
            <person name="Sena J.A.D."/>
            <person name="Silva C."/>
            <person name="de Souza R.F."/>
            <person name="Spinola L.A.F."/>
            <person name="Takita M.A."/>
            <person name="Tamura R.E."/>
            <person name="Teixeira E.C."/>
            <person name="Tezza R.I.D."/>
            <person name="Trindade dos Santos M."/>
            <person name="Truffi D."/>
            <person name="Tsai S.M."/>
            <person name="White F.F."/>
            <person name="Setubal J.C."/>
            <person name="Kitajima J.P."/>
        </authorList>
    </citation>
    <scope>NUCLEOTIDE SEQUENCE [LARGE SCALE GENOMIC DNA]</scope>
    <source>
        <strain>306</strain>
    </source>
</reference>
<name>FTSK_XANAC</name>
<feature type="chain" id="PRO_0000098319" description="DNA translocase FtsK">
    <location>
        <begin position="1"/>
        <end position="785"/>
    </location>
</feature>
<feature type="transmembrane region" description="Helical" evidence="2">
    <location>
        <begin position="37"/>
        <end position="57"/>
    </location>
</feature>
<feature type="transmembrane region" description="Helical" evidence="2">
    <location>
        <begin position="92"/>
        <end position="112"/>
    </location>
</feature>
<feature type="transmembrane region" description="Helical" evidence="2">
    <location>
        <begin position="123"/>
        <end position="143"/>
    </location>
</feature>
<feature type="transmembrane region" description="Helical" evidence="2">
    <location>
        <begin position="179"/>
        <end position="199"/>
    </location>
</feature>
<feature type="topological domain" description="Cytoplasmic" evidence="2">
    <location>
        <begin position="200"/>
        <end position="785"/>
    </location>
</feature>
<feature type="domain" description="FtsK" evidence="3">
    <location>
        <begin position="420"/>
        <end position="633"/>
    </location>
</feature>
<feature type="region of interest" description="Disordered" evidence="4">
    <location>
        <begin position="1"/>
        <end position="27"/>
    </location>
</feature>
<feature type="compositionally biased region" description="Basic and acidic residues" evidence="4">
    <location>
        <begin position="1"/>
        <end position="14"/>
    </location>
</feature>
<feature type="binding site" evidence="3">
    <location>
        <begin position="440"/>
        <end position="445"/>
    </location>
    <ligand>
        <name>ATP</name>
        <dbReference type="ChEBI" id="CHEBI:30616"/>
    </ligand>
</feature>
<evidence type="ECO:0000250" key="1"/>
<evidence type="ECO:0000255" key="2"/>
<evidence type="ECO:0000255" key="3">
    <source>
        <dbReference type="PROSITE-ProRule" id="PRU00289"/>
    </source>
</evidence>
<evidence type="ECO:0000256" key="4">
    <source>
        <dbReference type="SAM" id="MobiDB-lite"/>
    </source>
</evidence>
<evidence type="ECO:0000305" key="5"/>
<comment type="function">
    <text evidence="1">Essential cell division protein that coordinates cell division and chromosome segregation. The N-terminus is involved in assembly of the cell-division machinery. The C-terminus functions as a DNA motor that moves dsDNA in an ATP-dependent manner towards the dif recombination site, which is located within the replication terminus region. Translocation stops specifically at Xer-dif sites, where FtsK interacts with the Xer recombinase, allowing activation of chromosome unlinking by recombination. FtsK orienting polar sequences (KOPS) guide the direction of DNA translocation. FtsK can remove proteins from DNA as it translocates, but translocation stops specifically at XerCD-dif site, thereby preventing removal of XerC and XerD from dif (By similarity).</text>
</comment>
<comment type="subunit">
    <text evidence="1">Homohexamer. Forms a ring that surrounds DNA (By similarity).</text>
</comment>
<comment type="subcellular location">
    <subcellularLocation>
        <location evidence="1">Cell inner membrane</location>
        <topology evidence="1">Multi-pass membrane protein</topology>
    </subcellularLocation>
    <text evidence="1">Located at the septum.</text>
</comment>
<comment type="domain">
    <text evidence="1">Consists of an N-terminal domain, which is sufficient for the localization to the septal ring and is required for cell division, followed by a linker domain, and a C-terminal domain, which forms the translocation motor involved in chromosome segregation. The C-terminal domain can be further subdivided into alpha, beta and gamma subdomains. The alpha and beta subdomains multimerise to produce a hexameric ring, contain the nucleotide binding motif and form the DNA pump. The gamma subdomain is a regulatory subdomain that controls translocation of DNA by recognition of KOPS motifs and interacts with XerD recombinase (By similarity).</text>
</comment>
<comment type="similarity">
    <text evidence="5">Belongs to the FtsK/SpoIIIE/SftA family.</text>
</comment>
<sequence length="785" mass="84989">MAKQVPERSSKPAEGKSSSRKTAAADNPRRQKLWRDLALIAVAPLLLYLLASLFTYSATDPGWSRTGNLVAPIHNMGGRFGALAADVLLQLFGYVAFLLPVLLGAVAWIALIGDREEQTQSDLGPALRLVGMVGFLISSTGFLHLRLFQGEVAEAGGILGKLVAGSLSSRFGALGANLFVLVLLLVSITLATGLSWFAVMERIGKWVLALGPLMQRKTHQATEWQQTRVMREEREEVRKVDAVKQAKREPVKIEPPPAPVVEKSERAKRDTQIPMFQGVSTDGSDLPPLALLDDPKPQTKGYSEETLETLSRQIEFKLKDFRIEAQVVGAYPGPVITRFEIEPAPGIKVSQISSLDKDIARGLSVKSVRVVDVIPGKSVIGLEIPNVSREMIFLSELLRSKEYDKSASPLTLALGKDIAGRPTVADLARMPHLLVAGTTGSGKSVAVNAMVLSLLFKASHKELRMLMIDPKMLELSVYQGIPHLLAPVVTDMKEAANGLRWCVAEMERRYKLMSAVGVRNLAGFNKKVKDAIDAGQPMMDPLFKPNPELGEAPRPLETLPFIVIFIDEFADMMMIVGKKVEELIARLAQKARAAGIHLILATQRPSVDVITGLIKANIPTRVAFQVSSKIDSRTILDQSGAEALLGNGDMLYLPPGTALPDRVHGAFVSDEEVHRVVEHLKASGPVSYVEGVLDEVQTMGDGTVVGATGLPESSGGGGDESDPLYDEALRIVTETRRASISGVQRRLKIGYNRAARLIEAMEAAGVVSPPEHNGDRTVLAPPPPK</sequence>
<gene>
    <name type="primary">ftsK</name>
    <name type="ordered locus">XAC2006</name>
</gene>
<accession>Q8PL00</accession>
<keyword id="KW-0067">ATP-binding</keyword>
<keyword id="KW-0131">Cell cycle</keyword>
<keyword id="KW-0132">Cell division</keyword>
<keyword id="KW-0997">Cell inner membrane</keyword>
<keyword id="KW-1003">Cell membrane</keyword>
<keyword id="KW-0159">Chromosome partition</keyword>
<keyword id="KW-0238">DNA-binding</keyword>
<keyword id="KW-0472">Membrane</keyword>
<keyword id="KW-0547">Nucleotide-binding</keyword>
<keyword id="KW-0812">Transmembrane</keyword>
<keyword id="KW-1133">Transmembrane helix</keyword>
<dbReference type="EMBL" id="AE008923">
    <property type="protein sequence ID" value="AAM36868.1"/>
    <property type="molecule type" value="Genomic_DNA"/>
</dbReference>
<dbReference type="RefSeq" id="WP_011051274.1">
    <property type="nucleotide sequence ID" value="NC_003919.1"/>
</dbReference>
<dbReference type="SMR" id="Q8PL00"/>
<dbReference type="KEGG" id="xac:XAC2006"/>
<dbReference type="eggNOG" id="COG1674">
    <property type="taxonomic scope" value="Bacteria"/>
</dbReference>
<dbReference type="HOGENOM" id="CLU_001981_9_7_6"/>
<dbReference type="Proteomes" id="UP000000576">
    <property type="component" value="Chromosome"/>
</dbReference>
<dbReference type="GO" id="GO:0005886">
    <property type="term" value="C:plasma membrane"/>
    <property type="evidence" value="ECO:0007669"/>
    <property type="project" value="UniProtKB-SubCell"/>
</dbReference>
<dbReference type="GO" id="GO:0005524">
    <property type="term" value="F:ATP binding"/>
    <property type="evidence" value="ECO:0007669"/>
    <property type="project" value="UniProtKB-KW"/>
</dbReference>
<dbReference type="GO" id="GO:0016887">
    <property type="term" value="F:ATP hydrolysis activity"/>
    <property type="evidence" value="ECO:0007669"/>
    <property type="project" value="InterPro"/>
</dbReference>
<dbReference type="GO" id="GO:0003677">
    <property type="term" value="F:DNA binding"/>
    <property type="evidence" value="ECO:0007669"/>
    <property type="project" value="UniProtKB-KW"/>
</dbReference>
<dbReference type="GO" id="GO:0051301">
    <property type="term" value="P:cell division"/>
    <property type="evidence" value="ECO:0007669"/>
    <property type="project" value="UniProtKB-KW"/>
</dbReference>
<dbReference type="GO" id="GO:0007059">
    <property type="term" value="P:chromosome segregation"/>
    <property type="evidence" value="ECO:0007669"/>
    <property type="project" value="UniProtKB-KW"/>
</dbReference>
<dbReference type="CDD" id="cd01127">
    <property type="entry name" value="TrwB_TraG_TraD_VirD4"/>
    <property type="match status" value="1"/>
</dbReference>
<dbReference type="FunFam" id="3.40.50.300:FF:000209">
    <property type="entry name" value="Cell division protein FtsK"/>
    <property type="match status" value="1"/>
</dbReference>
<dbReference type="Gene3D" id="3.30.980.40">
    <property type="match status" value="1"/>
</dbReference>
<dbReference type="Gene3D" id="3.40.50.300">
    <property type="entry name" value="P-loop containing nucleotide triphosphate hydrolases"/>
    <property type="match status" value="1"/>
</dbReference>
<dbReference type="Gene3D" id="1.10.10.10">
    <property type="entry name" value="Winged helix-like DNA-binding domain superfamily/Winged helix DNA-binding domain"/>
    <property type="match status" value="1"/>
</dbReference>
<dbReference type="InterPro" id="IPR003593">
    <property type="entry name" value="AAA+_ATPase"/>
</dbReference>
<dbReference type="InterPro" id="IPR050206">
    <property type="entry name" value="FtsK/SpoIIIE/SftA"/>
</dbReference>
<dbReference type="InterPro" id="IPR025199">
    <property type="entry name" value="FtsK_4TM"/>
</dbReference>
<dbReference type="InterPro" id="IPR041027">
    <property type="entry name" value="FtsK_alpha"/>
</dbReference>
<dbReference type="InterPro" id="IPR002543">
    <property type="entry name" value="FtsK_dom"/>
</dbReference>
<dbReference type="InterPro" id="IPR018541">
    <property type="entry name" value="Ftsk_gamma"/>
</dbReference>
<dbReference type="InterPro" id="IPR027417">
    <property type="entry name" value="P-loop_NTPase"/>
</dbReference>
<dbReference type="InterPro" id="IPR036388">
    <property type="entry name" value="WH-like_DNA-bd_sf"/>
</dbReference>
<dbReference type="InterPro" id="IPR036390">
    <property type="entry name" value="WH_DNA-bd_sf"/>
</dbReference>
<dbReference type="PANTHER" id="PTHR22683:SF41">
    <property type="entry name" value="DNA TRANSLOCASE FTSK"/>
    <property type="match status" value="1"/>
</dbReference>
<dbReference type="PANTHER" id="PTHR22683">
    <property type="entry name" value="SPORULATION PROTEIN RELATED"/>
    <property type="match status" value="1"/>
</dbReference>
<dbReference type="Pfam" id="PF13491">
    <property type="entry name" value="FtsK_4TM"/>
    <property type="match status" value="1"/>
</dbReference>
<dbReference type="Pfam" id="PF17854">
    <property type="entry name" value="FtsK_alpha"/>
    <property type="match status" value="1"/>
</dbReference>
<dbReference type="Pfam" id="PF09397">
    <property type="entry name" value="FtsK_gamma"/>
    <property type="match status" value="1"/>
</dbReference>
<dbReference type="Pfam" id="PF01580">
    <property type="entry name" value="FtsK_SpoIIIE"/>
    <property type="match status" value="1"/>
</dbReference>
<dbReference type="SMART" id="SM00382">
    <property type="entry name" value="AAA"/>
    <property type="match status" value="1"/>
</dbReference>
<dbReference type="SMART" id="SM00843">
    <property type="entry name" value="Ftsk_gamma"/>
    <property type="match status" value="1"/>
</dbReference>
<dbReference type="SUPFAM" id="SSF52540">
    <property type="entry name" value="P-loop containing nucleoside triphosphate hydrolases"/>
    <property type="match status" value="1"/>
</dbReference>
<dbReference type="SUPFAM" id="SSF46785">
    <property type="entry name" value="Winged helix' DNA-binding domain"/>
    <property type="match status" value="1"/>
</dbReference>
<dbReference type="PROSITE" id="PS50901">
    <property type="entry name" value="FTSK"/>
    <property type="match status" value="1"/>
</dbReference>